<organism>
    <name type="scientific">Mus musculus</name>
    <name type="common">Mouse</name>
    <dbReference type="NCBI Taxonomy" id="10090"/>
    <lineage>
        <taxon>Eukaryota</taxon>
        <taxon>Metazoa</taxon>
        <taxon>Chordata</taxon>
        <taxon>Craniata</taxon>
        <taxon>Vertebrata</taxon>
        <taxon>Euteleostomi</taxon>
        <taxon>Mammalia</taxon>
        <taxon>Eutheria</taxon>
        <taxon>Euarchontoglires</taxon>
        <taxon>Glires</taxon>
        <taxon>Rodentia</taxon>
        <taxon>Myomorpha</taxon>
        <taxon>Muroidea</taxon>
        <taxon>Muridae</taxon>
        <taxon>Murinae</taxon>
        <taxon>Mus</taxon>
        <taxon>Mus</taxon>
    </lineage>
</organism>
<dbReference type="EMBL" id="AK052197">
    <property type="protein sequence ID" value="BAC34879.1"/>
    <property type="molecule type" value="mRNA"/>
</dbReference>
<dbReference type="EMBL" id="AK158647">
    <property type="protein sequence ID" value="BAE34597.1"/>
    <property type="molecule type" value="mRNA"/>
</dbReference>
<dbReference type="CCDS" id="CCDS28961.2">
    <molecule id="Q3TYG6-1"/>
</dbReference>
<dbReference type="RefSeq" id="NP_796061.2">
    <molecule id="Q3TYG6-1"/>
    <property type="nucleotide sequence ID" value="NM_177087.4"/>
</dbReference>
<dbReference type="BioGRID" id="235805">
    <property type="interactions" value="2"/>
</dbReference>
<dbReference type="FunCoup" id="Q3TYG6">
    <property type="interactions" value="5"/>
</dbReference>
<dbReference type="STRING" id="10090.ENSMUSP00000094886"/>
<dbReference type="GlyGen" id="Q3TYG6">
    <property type="glycosylation" value="1 site, 1 O-linked glycan (1 site)"/>
</dbReference>
<dbReference type="iPTMnet" id="Q3TYG6"/>
<dbReference type="PhosphoSitePlus" id="Q3TYG6"/>
<dbReference type="PaxDb" id="10090-ENSMUSP00000114359"/>
<dbReference type="ProteomicsDB" id="258869">
    <molecule id="Q3TYG6-1"/>
</dbReference>
<dbReference type="ProteomicsDB" id="258870">
    <molecule id="Q3TYG6-2"/>
</dbReference>
<dbReference type="Antibodypedia" id="51094">
    <property type="antibodies" value="13 antibodies from 6 providers"/>
</dbReference>
<dbReference type="DNASU" id="320159"/>
<dbReference type="Ensembl" id="ENSMUST00000097284.10">
    <molecule id="Q3TYG6-1"/>
    <property type="protein sequence ID" value="ENSMUSP00000094886.4"/>
    <property type="gene ID" value="ENSMUSG00000045761.17"/>
</dbReference>
<dbReference type="Ensembl" id="ENSMUST00000153445.9">
    <molecule id="Q3TYG6-1"/>
    <property type="protein sequence ID" value="ENSMUSP00000122691.2"/>
    <property type="gene ID" value="ENSMUSG00000045761.17"/>
</dbReference>
<dbReference type="GeneID" id="320159"/>
<dbReference type="KEGG" id="mmu:320159"/>
<dbReference type="UCSC" id="uc008dmt.1">
    <molecule id="Q3TYG6-1"/>
    <property type="organism name" value="mouse"/>
</dbReference>
<dbReference type="AGR" id="MGI:2443498"/>
<dbReference type="CTD" id="165186"/>
<dbReference type="MGI" id="MGI:2443498">
    <property type="gene designation" value="Togaram2"/>
</dbReference>
<dbReference type="VEuPathDB" id="HostDB:ENSMUSG00000045761"/>
<dbReference type="eggNOG" id="KOG2933">
    <property type="taxonomic scope" value="Eukaryota"/>
</dbReference>
<dbReference type="GeneTree" id="ENSGT00940000156217"/>
<dbReference type="HOGENOM" id="CLU_306027_0_0_1"/>
<dbReference type="InParanoid" id="Q3TYG6"/>
<dbReference type="OMA" id="PIRDRPA"/>
<dbReference type="PhylomeDB" id="Q3TYG6"/>
<dbReference type="BioGRID-ORCS" id="320159">
    <property type="hits" value="2 hits in 75 CRISPR screens"/>
</dbReference>
<dbReference type="PRO" id="PR:Q3TYG6"/>
<dbReference type="Proteomes" id="UP000000589">
    <property type="component" value="Chromosome 17"/>
</dbReference>
<dbReference type="RNAct" id="Q3TYG6">
    <property type="molecule type" value="protein"/>
</dbReference>
<dbReference type="Bgee" id="ENSMUSG00000045761">
    <property type="expression patterns" value="Expressed in olfactory epithelium and 46 other cell types or tissues"/>
</dbReference>
<dbReference type="ExpressionAtlas" id="Q3TYG6">
    <property type="expression patterns" value="baseline and differential"/>
</dbReference>
<dbReference type="GO" id="GO:0015630">
    <property type="term" value="C:microtubule cytoskeleton"/>
    <property type="evidence" value="ECO:0007669"/>
    <property type="project" value="UniProtKB-ARBA"/>
</dbReference>
<dbReference type="GO" id="GO:0008017">
    <property type="term" value="F:microtubule binding"/>
    <property type="evidence" value="ECO:0007669"/>
    <property type="project" value="UniProtKB-ARBA"/>
</dbReference>
<dbReference type="GO" id="GO:0051494">
    <property type="term" value="P:negative regulation of cytoskeleton organization"/>
    <property type="evidence" value="ECO:0007669"/>
    <property type="project" value="UniProtKB-ARBA"/>
</dbReference>
<dbReference type="GO" id="GO:1902904">
    <property type="term" value="P:negative regulation of supramolecular fiber organization"/>
    <property type="evidence" value="ECO:0007669"/>
    <property type="project" value="UniProtKB-ARBA"/>
</dbReference>
<dbReference type="Gene3D" id="1.25.10.10">
    <property type="entry name" value="Leucine-rich Repeat Variant"/>
    <property type="match status" value="2"/>
</dbReference>
<dbReference type="InterPro" id="IPR011989">
    <property type="entry name" value="ARM-like"/>
</dbReference>
<dbReference type="InterPro" id="IPR016024">
    <property type="entry name" value="ARM-type_fold"/>
</dbReference>
<dbReference type="InterPro" id="IPR024395">
    <property type="entry name" value="CLASP_N_dom"/>
</dbReference>
<dbReference type="InterPro" id="IPR034085">
    <property type="entry name" value="TOG"/>
</dbReference>
<dbReference type="PANTHER" id="PTHR21567">
    <property type="entry name" value="CLASP"/>
    <property type="match status" value="1"/>
</dbReference>
<dbReference type="PANTHER" id="PTHR21567:SF42">
    <property type="entry name" value="TOG ARRAY REGULATOR OF AXONEMAL MICROTUBULES PROTEIN 2"/>
    <property type="match status" value="1"/>
</dbReference>
<dbReference type="Pfam" id="PF12348">
    <property type="entry name" value="CLASP_N"/>
    <property type="match status" value="1"/>
</dbReference>
<dbReference type="SMART" id="SM01349">
    <property type="entry name" value="TOG"/>
    <property type="match status" value="2"/>
</dbReference>
<dbReference type="SUPFAM" id="SSF48371">
    <property type="entry name" value="ARM repeat"/>
    <property type="match status" value="1"/>
</dbReference>
<feature type="chain" id="PRO_0000325939" description="TOG array regulator of axonemal microtubules protein 2">
    <location>
        <begin position="1"/>
        <end position="1002"/>
    </location>
</feature>
<feature type="region of interest" description="Disordered" evidence="1">
    <location>
        <begin position="54"/>
        <end position="74"/>
    </location>
</feature>
<feature type="region of interest" description="Disordered" evidence="1">
    <location>
        <begin position="131"/>
        <end position="214"/>
    </location>
</feature>
<feature type="region of interest" description="Disordered" evidence="1">
    <location>
        <begin position="332"/>
        <end position="351"/>
    </location>
</feature>
<feature type="region of interest" description="Disordered" evidence="1">
    <location>
        <begin position="402"/>
        <end position="421"/>
    </location>
</feature>
<feature type="region of interest" description="Disordered" evidence="1">
    <location>
        <begin position="426"/>
        <end position="450"/>
    </location>
</feature>
<feature type="splice variant" id="VSP_032496" description="In isoform 2." evidence="2">
    <location>
        <begin position="1"/>
        <end position="706"/>
    </location>
</feature>
<feature type="splice variant" id="VSP_032497" description="In isoform 2." evidence="2">
    <original>AIKQRGIQDNHELQSAKGRKVSKSLVVCENGLPSHEG</original>
    <variation>MCSSPGLFPRGQPLLPPRLGSNGPRLMGLRSSSVRGS</variation>
    <location>
        <begin position="707"/>
        <end position="743"/>
    </location>
</feature>
<comment type="alternative products">
    <event type="alternative splicing"/>
    <isoform>
        <id>Q3TYG6-1</id>
        <name>1</name>
        <sequence type="displayed"/>
    </isoform>
    <isoform>
        <id>Q3TYG6-2</id>
        <name>2</name>
        <sequence type="described" ref="VSP_032496 VSP_032497"/>
    </isoform>
</comment>
<comment type="similarity">
    <text evidence="4">Belongs to the Crescerin family.</text>
</comment>
<accession>Q3TYG6</accession>
<accession>Q8C7B2</accession>
<protein>
    <recommendedName>
        <fullName>TOG array regulator of axonemal microtubules protein 2</fullName>
    </recommendedName>
    <alternativeName>
        <fullName evidence="3">Crescerin-2</fullName>
    </alternativeName>
    <alternativeName>
        <fullName>Protein FAM179A</fullName>
    </alternativeName>
</protein>
<sequence length="1002" mass="108975">MDTRDDVTLAKVPAPVAVYCGSVPRTSVGLRAPPPGGIDSSLLAHDEASLQPVSSVLPSSEKPSQLSREHEDQSSLMLNAPLKGWQARNGYPRGLGVLPLGHHLGAAIPSLESEASSVARDTIQIKDKLKKRRLSEGMAASSQASLDPVGGPRGVPLRSTIPRTTSQRLLRVPRPMPPIQSIPTTPEANSAKEKDLDPPGGRQDLQDPGASAQEVQISRQYLHCADEKMHKSLGGLVIPPIPKARMPTGTSSCRPGSLPSPLCPSQDVLMGPKAPHTRLTCENGPLEKTPKSPASKPLVPVVKAKSAEAPETSLASSQSTFTLTAFSSHAKETRSLENEEDQKESSTKVQVTISKSAQEKMRLKQMKEMELLRRAKEPEWERELVSQGLGTRRTSAKEGLLPLRGSGALSEPAGMSSPRRNNMGALQRKRANRASLPSIPVSKQEPGFARHASANSLPAVLTLGSPEWEEEEEEMDLRALRELRPFSNPELGLTDALQCLNSNDWQMKEKGLVNIQRLAACHSEVLGTRLHDVSLAVTAEVTNLRSKVSRLAISTLGDLFRVLKKNMDQEAEEIVRCLLQKMGNTSEFIQRAANRALGAMVENVTPARALVALTSAGVYHRNPLVRKCTAKHLSAVLEQIGAEKLLSGSRDNTDMLVHNLVRLAQDSNQDTRFYGRKMVNILMANAKFDAFLKQSLPSHDLRKVMAAIKQRGIQDNHELQSAKGRKVSKSLVVCENGLPSHEGVETSEQLRELTRLLEAKEFQARMEGVGKLLEYCKAKPELVAANLVQVFDVFTPRLHDSNKKVNQWALESLAQMLPILKESIHPMLLSLIIAAADNLNSKNSGISTAASTVLDAMMGSLDHLCLLQAFAGRVRFLTGPAVLDITDRLSVLVASVYPRKPQAVERHILPVLWYFLNKMSGNGVLPGRGGNVRTAVCRLARSLQEQMGSRLQDFAASQPQQVLKALQGLLASESLGANDKVIGGRMAPDIQMTGTTCPQQLD</sequence>
<reference key="1">
    <citation type="journal article" date="2005" name="Science">
        <title>The transcriptional landscape of the mammalian genome.</title>
        <authorList>
            <person name="Carninci P."/>
            <person name="Kasukawa T."/>
            <person name="Katayama S."/>
            <person name="Gough J."/>
            <person name="Frith M.C."/>
            <person name="Maeda N."/>
            <person name="Oyama R."/>
            <person name="Ravasi T."/>
            <person name="Lenhard B."/>
            <person name="Wells C."/>
            <person name="Kodzius R."/>
            <person name="Shimokawa K."/>
            <person name="Bajic V.B."/>
            <person name="Brenner S.E."/>
            <person name="Batalov S."/>
            <person name="Forrest A.R."/>
            <person name="Zavolan M."/>
            <person name="Davis M.J."/>
            <person name="Wilming L.G."/>
            <person name="Aidinis V."/>
            <person name="Allen J.E."/>
            <person name="Ambesi-Impiombato A."/>
            <person name="Apweiler R."/>
            <person name="Aturaliya R.N."/>
            <person name="Bailey T.L."/>
            <person name="Bansal M."/>
            <person name="Baxter L."/>
            <person name="Beisel K.W."/>
            <person name="Bersano T."/>
            <person name="Bono H."/>
            <person name="Chalk A.M."/>
            <person name="Chiu K.P."/>
            <person name="Choudhary V."/>
            <person name="Christoffels A."/>
            <person name="Clutterbuck D.R."/>
            <person name="Crowe M.L."/>
            <person name="Dalla E."/>
            <person name="Dalrymple B.P."/>
            <person name="de Bono B."/>
            <person name="Della Gatta G."/>
            <person name="di Bernardo D."/>
            <person name="Down T."/>
            <person name="Engstrom P."/>
            <person name="Fagiolini M."/>
            <person name="Faulkner G."/>
            <person name="Fletcher C.F."/>
            <person name="Fukushima T."/>
            <person name="Furuno M."/>
            <person name="Futaki S."/>
            <person name="Gariboldi M."/>
            <person name="Georgii-Hemming P."/>
            <person name="Gingeras T.R."/>
            <person name="Gojobori T."/>
            <person name="Green R.E."/>
            <person name="Gustincich S."/>
            <person name="Harbers M."/>
            <person name="Hayashi Y."/>
            <person name="Hensch T.K."/>
            <person name="Hirokawa N."/>
            <person name="Hill D."/>
            <person name="Huminiecki L."/>
            <person name="Iacono M."/>
            <person name="Ikeo K."/>
            <person name="Iwama A."/>
            <person name="Ishikawa T."/>
            <person name="Jakt M."/>
            <person name="Kanapin A."/>
            <person name="Katoh M."/>
            <person name="Kawasawa Y."/>
            <person name="Kelso J."/>
            <person name="Kitamura H."/>
            <person name="Kitano H."/>
            <person name="Kollias G."/>
            <person name="Krishnan S.P."/>
            <person name="Kruger A."/>
            <person name="Kummerfeld S.K."/>
            <person name="Kurochkin I.V."/>
            <person name="Lareau L.F."/>
            <person name="Lazarevic D."/>
            <person name="Lipovich L."/>
            <person name="Liu J."/>
            <person name="Liuni S."/>
            <person name="McWilliam S."/>
            <person name="Madan Babu M."/>
            <person name="Madera M."/>
            <person name="Marchionni L."/>
            <person name="Matsuda H."/>
            <person name="Matsuzawa S."/>
            <person name="Miki H."/>
            <person name="Mignone F."/>
            <person name="Miyake S."/>
            <person name="Morris K."/>
            <person name="Mottagui-Tabar S."/>
            <person name="Mulder N."/>
            <person name="Nakano N."/>
            <person name="Nakauchi H."/>
            <person name="Ng P."/>
            <person name="Nilsson R."/>
            <person name="Nishiguchi S."/>
            <person name="Nishikawa S."/>
            <person name="Nori F."/>
            <person name="Ohara O."/>
            <person name="Okazaki Y."/>
            <person name="Orlando V."/>
            <person name="Pang K.C."/>
            <person name="Pavan W.J."/>
            <person name="Pavesi G."/>
            <person name="Pesole G."/>
            <person name="Petrovsky N."/>
            <person name="Piazza S."/>
            <person name="Reed J."/>
            <person name="Reid J.F."/>
            <person name="Ring B.Z."/>
            <person name="Ringwald M."/>
            <person name="Rost B."/>
            <person name="Ruan Y."/>
            <person name="Salzberg S.L."/>
            <person name="Sandelin A."/>
            <person name="Schneider C."/>
            <person name="Schoenbach C."/>
            <person name="Sekiguchi K."/>
            <person name="Semple C.A."/>
            <person name="Seno S."/>
            <person name="Sessa L."/>
            <person name="Sheng Y."/>
            <person name="Shibata Y."/>
            <person name="Shimada H."/>
            <person name="Shimada K."/>
            <person name="Silva D."/>
            <person name="Sinclair B."/>
            <person name="Sperling S."/>
            <person name="Stupka E."/>
            <person name="Sugiura K."/>
            <person name="Sultana R."/>
            <person name="Takenaka Y."/>
            <person name="Taki K."/>
            <person name="Tammoja K."/>
            <person name="Tan S.L."/>
            <person name="Tang S."/>
            <person name="Taylor M.S."/>
            <person name="Tegner J."/>
            <person name="Teichmann S.A."/>
            <person name="Ueda H.R."/>
            <person name="van Nimwegen E."/>
            <person name="Verardo R."/>
            <person name="Wei C.L."/>
            <person name="Yagi K."/>
            <person name="Yamanishi H."/>
            <person name="Zabarovsky E."/>
            <person name="Zhu S."/>
            <person name="Zimmer A."/>
            <person name="Hide W."/>
            <person name="Bult C."/>
            <person name="Grimmond S.M."/>
            <person name="Teasdale R.D."/>
            <person name="Liu E.T."/>
            <person name="Brusic V."/>
            <person name="Quackenbush J."/>
            <person name="Wahlestedt C."/>
            <person name="Mattick J.S."/>
            <person name="Hume D.A."/>
            <person name="Kai C."/>
            <person name="Sasaki D."/>
            <person name="Tomaru Y."/>
            <person name="Fukuda S."/>
            <person name="Kanamori-Katayama M."/>
            <person name="Suzuki M."/>
            <person name="Aoki J."/>
            <person name="Arakawa T."/>
            <person name="Iida J."/>
            <person name="Imamura K."/>
            <person name="Itoh M."/>
            <person name="Kato T."/>
            <person name="Kawaji H."/>
            <person name="Kawagashira N."/>
            <person name="Kawashima T."/>
            <person name="Kojima M."/>
            <person name="Kondo S."/>
            <person name="Konno H."/>
            <person name="Nakano K."/>
            <person name="Ninomiya N."/>
            <person name="Nishio T."/>
            <person name="Okada M."/>
            <person name="Plessy C."/>
            <person name="Shibata K."/>
            <person name="Shiraki T."/>
            <person name="Suzuki S."/>
            <person name="Tagami M."/>
            <person name="Waki K."/>
            <person name="Watahiki A."/>
            <person name="Okamura-Oho Y."/>
            <person name="Suzuki H."/>
            <person name="Kawai J."/>
            <person name="Hayashizaki Y."/>
        </authorList>
    </citation>
    <scope>NUCLEOTIDE SEQUENCE [LARGE SCALE MRNA] (ISOFORMS 1 AND 2)</scope>
    <source>
        <strain>C57BL/6J</strain>
        <tissue>Heart</tissue>
        <tissue>Visual cortex</tissue>
    </source>
</reference>
<reference key="2">
    <citation type="journal article" date="2015" name="Mol. Biol. Cell">
        <title>Crescerin uses a TOG domain array to regulate microtubules in the primary cilium.</title>
        <authorList>
            <person name="Das A."/>
            <person name="Dickinson D.J."/>
            <person name="Wood C.C."/>
            <person name="Goldstein B."/>
            <person name="Slep K.C."/>
        </authorList>
    </citation>
    <scope>NOMENCLATURE</scope>
</reference>
<gene>
    <name type="primary">Togaram2</name>
    <name type="synonym">Fam179a</name>
</gene>
<evidence type="ECO:0000256" key="1">
    <source>
        <dbReference type="SAM" id="MobiDB-lite"/>
    </source>
</evidence>
<evidence type="ECO:0000303" key="2">
    <source>
    </source>
</evidence>
<evidence type="ECO:0000303" key="3">
    <source>
    </source>
</evidence>
<evidence type="ECO:0000305" key="4"/>
<proteinExistence type="evidence at transcript level"/>
<name>TGRM2_MOUSE</name>
<keyword id="KW-0025">Alternative splicing</keyword>
<keyword id="KW-1185">Reference proteome</keyword>